<organism>
    <name type="scientific">Homo sapiens</name>
    <name type="common">Human</name>
    <dbReference type="NCBI Taxonomy" id="9606"/>
    <lineage>
        <taxon>Eukaryota</taxon>
        <taxon>Metazoa</taxon>
        <taxon>Chordata</taxon>
        <taxon>Craniata</taxon>
        <taxon>Vertebrata</taxon>
        <taxon>Euteleostomi</taxon>
        <taxon>Mammalia</taxon>
        <taxon>Eutheria</taxon>
        <taxon>Euarchontoglires</taxon>
        <taxon>Primates</taxon>
        <taxon>Haplorrhini</taxon>
        <taxon>Catarrhini</taxon>
        <taxon>Hominidae</taxon>
        <taxon>Homo</taxon>
    </lineage>
</organism>
<name>RLF_HUMAN</name>
<keyword id="KW-0238">DNA-binding</keyword>
<keyword id="KW-1017">Isopeptide bond</keyword>
<keyword id="KW-0479">Metal-binding</keyword>
<keyword id="KW-0539">Nucleus</keyword>
<keyword id="KW-0597">Phosphoprotein</keyword>
<keyword id="KW-1267">Proteomics identification</keyword>
<keyword id="KW-1185">Reference proteome</keyword>
<keyword id="KW-0677">Repeat</keyword>
<keyword id="KW-0804">Transcription</keyword>
<keyword id="KW-0805">Transcription regulation</keyword>
<keyword id="KW-0832">Ubl conjugation</keyword>
<keyword id="KW-0862">Zinc</keyword>
<keyword id="KW-0863">Zinc-finger</keyword>
<reference key="1">
    <citation type="journal article" date="1995" name="Oncogene">
        <title>The rearranged L-myc fusion gene (RLF) encodes a Zn-15 related zinc finger protein.</title>
        <authorList>
            <person name="Makela T.P."/>
            <person name="Hellsten E."/>
            <person name="Vesa J."/>
            <person name="Hirvonen H."/>
            <person name="Palotie A."/>
            <person name="Peltonen L."/>
            <person name="Alitalo K."/>
        </authorList>
    </citation>
    <scope>NUCLEOTIDE SEQUENCE [MRNA]</scope>
</reference>
<reference key="2">
    <citation type="journal article" date="2006" name="Nature">
        <title>The DNA sequence and biological annotation of human chromosome 1.</title>
        <authorList>
            <person name="Gregory S.G."/>
            <person name="Barlow K.F."/>
            <person name="McLay K.E."/>
            <person name="Kaul R."/>
            <person name="Swarbreck D."/>
            <person name="Dunham A."/>
            <person name="Scott C.E."/>
            <person name="Howe K.L."/>
            <person name="Woodfine K."/>
            <person name="Spencer C.C.A."/>
            <person name="Jones M.C."/>
            <person name="Gillson C."/>
            <person name="Searle S."/>
            <person name="Zhou Y."/>
            <person name="Kokocinski F."/>
            <person name="McDonald L."/>
            <person name="Evans R."/>
            <person name="Phillips K."/>
            <person name="Atkinson A."/>
            <person name="Cooper R."/>
            <person name="Jones C."/>
            <person name="Hall R.E."/>
            <person name="Andrews T.D."/>
            <person name="Lloyd C."/>
            <person name="Ainscough R."/>
            <person name="Almeida J.P."/>
            <person name="Ambrose K.D."/>
            <person name="Anderson F."/>
            <person name="Andrew R.W."/>
            <person name="Ashwell R.I.S."/>
            <person name="Aubin K."/>
            <person name="Babbage A.K."/>
            <person name="Bagguley C.L."/>
            <person name="Bailey J."/>
            <person name="Beasley H."/>
            <person name="Bethel G."/>
            <person name="Bird C.P."/>
            <person name="Bray-Allen S."/>
            <person name="Brown J.Y."/>
            <person name="Brown A.J."/>
            <person name="Buckley D."/>
            <person name="Burton J."/>
            <person name="Bye J."/>
            <person name="Carder C."/>
            <person name="Chapman J.C."/>
            <person name="Clark S.Y."/>
            <person name="Clarke G."/>
            <person name="Clee C."/>
            <person name="Cobley V."/>
            <person name="Collier R.E."/>
            <person name="Corby N."/>
            <person name="Coville G.J."/>
            <person name="Davies J."/>
            <person name="Deadman R."/>
            <person name="Dunn M."/>
            <person name="Earthrowl M."/>
            <person name="Ellington A.G."/>
            <person name="Errington H."/>
            <person name="Frankish A."/>
            <person name="Frankland J."/>
            <person name="French L."/>
            <person name="Garner P."/>
            <person name="Garnett J."/>
            <person name="Gay L."/>
            <person name="Ghori M.R.J."/>
            <person name="Gibson R."/>
            <person name="Gilby L.M."/>
            <person name="Gillett W."/>
            <person name="Glithero R.J."/>
            <person name="Grafham D.V."/>
            <person name="Griffiths C."/>
            <person name="Griffiths-Jones S."/>
            <person name="Grocock R."/>
            <person name="Hammond S."/>
            <person name="Harrison E.S.I."/>
            <person name="Hart E."/>
            <person name="Haugen E."/>
            <person name="Heath P.D."/>
            <person name="Holmes S."/>
            <person name="Holt K."/>
            <person name="Howden P.J."/>
            <person name="Hunt A.R."/>
            <person name="Hunt S.E."/>
            <person name="Hunter G."/>
            <person name="Isherwood J."/>
            <person name="James R."/>
            <person name="Johnson C."/>
            <person name="Johnson D."/>
            <person name="Joy A."/>
            <person name="Kay M."/>
            <person name="Kershaw J.K."/>
            <person name="Kibukawa M."/>
            <person name="Kimberley A.M."/>
            <person name="King A."/>
            <person name="Knights A.J."/>
            <person name="Lad H."/>
            <person name="Laird G."/>
            <person name="Lawlor S."/>
            <person name="Leongamornlert D.A."/>
            <person name="Lloyd D.M."/>
            <person name="Loveland J."/>
            <person name="Lovell J."/>
            <person name="Lush M.J."/>
            <person name="Lyne R."/>
            <person name="Martin S."/>
            <person name="Mashreghi-Mohammadi M."/>
            <person name="Matthews L."/>
            <person name="Matthews N.S.W."/>
            <person name="McLaren S."/>
            <person name="Milne S."/>
            <person name="Mistry S."/>
            <person name="Moore M.J.F."/>
            <person name="Nickerson T."/>
            <person name="O'Dell C.N."/>
            <person name="Oliver K."/>
            <person name="Palmeiri A."/>
            <person name="Palmer S.A."/>
            <person name="Parker A."/>
            <person name="Patel D."/>
            <person name="Pearce A.V."/>
            <person name="Peck A.I."/>
            <person name="Pelan S."/>
            <person name="Phelps K."/>
            <person name="Phillimore B.J."/>
            <person name="Plumb R."/>
            <person name="Rajan J."/>
            <person name="Raymond C."/>
            <person name="Rouse G."/>
            <person name="Saenphimmachak C."/>
            <person name="Sehra H.K."/>
            <person name="Sheridan E."/>
            <person name="Shownkeen R."/>
            <person name="Sims S."/>
            <person name="Skuce C.D."/>
            <person name="Smith M."/>
            <person name="Steward C."/>
            <person name="Subramanian S."/>
            <person name="Sycamore N."/>
            <person name="Tracey A."/>
            <person name="Tromans A."/>
            <person name="Van Helmond Z."/>
            <person name="Wall M."/>
            <person name="Wallis J.M."/>
            <person name="White S."/>
            <person name="Whitehead S.L."/>
            <person name="Wilkinson J.E."/>
            <person name="Willey D.L."/>
            <person name="Williams H."/>
            <person name="Wilming L."/>
            <person name="Wray P.W."/>
            <person name="Wu Z."/>
            <person name="Coulson A."/>
            <person name="Vaudin M."/>
            <person name="Sulston J.E."/>
            <person name="Durbin R.M."/>
            <person name="Hubbard T."/>
            <person name="Wooster R."/>
            <person name="Dunham I."/>
            <person name="Carter N.P."/>
            <person name="McVean G."/>
            <person name="Ross M.T."/>
            <person name="Harrow J."/>
            <person name="Olson M.V."/>
            <person name="Beck S."/>
            <person name="Rogers J."/>
            <person name="Bentley D.R."/>
        </authorList>
    </citation>
    <scope>NUCLEOTIDE SEQUENCE [LARGE SCALE GENOMIC DNA]</scope>
</reference>
<reference key="3">
    <citation type="journal article" date="2004" name="Genome Res.">
        <title>The status, quality, and expansion of the NIH full-length cDNA project: the Mammalian Gene Collection (MGC).</title>
        <authorList>
            <consortium name="The MGC Project Team"/>
        </authorList>
    </citation>
    <scope>NUCLEOTIDE SEQUENCE [LARGE SCALE MRNA]</scope>
    <source>
        <tissue>Cerebellum</tissue>
    </source>
</reference>
<reference key="4">
    <citation type="journal article" date="2006" name="Cell">
        <title>Global, in vivo, and site-specific phosphorylation dynamics in signaling networks.</title>
        <authorList>
            <person name="Olsen J.V."/>
            <person name="Blagoev B."/>
            <person name="Gnad F."/>
            <person name="Macek B."/>
            <person name="Kumar C."/>
            <person name="Mortensen P."/>
            <person name="Mann M."/>
        </authorList>
    </citation>
    <scope>IDENTIFICATION BY MASS SPECTROMETRY [LARGE SCALE ANALYSIS]</scope>
    <source>
        <tissue>Cervix carcinoma</tissue>
    </source>
</reference>
<reference key="5">
    <citation type="journal article" date="2008" name="Proc. Natl. Acad. Sci. U.S.A.">
        <title>A quantitative atlas of mitotic phosphorylation.</title>
        <authorList>
            <person name="Dephoure N."/>
            <person name="Zhou C."/>
            <person name="Villen J."/>
            <person name="Beausoleil S.A."/>
            <person name="Bakalarski C.E."/>
            <person name="Elledge S.J."/>
            <person name="Gygi S.P."/>
        </authorList>
    </citation>
    <scope>PHOSPHORYLATION [LARGE SCALE ANALYSIS] AT SER-41</scope>
    <scope>IDENTIFICATION BY MASS SPECTROMETRY [LARGE SCALE ANALYSIS]</scope>
    <source>
        <tissue>Cervix carcinoma</tissue>
    </source>
</reference>
<reference key="6">
    <citation type="journal article" date="2011" name="Sci. Signal.">
        <title>System-wide temporal characterization of the proteome and phosphoproteome of human embryonic stem cell differentiation.</title>
        <authorList>
            <person name="Rigbolt K.T."/>
            <person name="Prokhorova T.A."/>
            <person name="Akimov V."/>
            <person name="Henningsen J."/>
            <person name="Johansen P.T."/>
            <person name="Kratchmarova I."/>
            <person name="Kassem M."/>
            <person name="Mann M."/>
            <person name="Olsen J.V."/>
            <person name="Blagoev B."/>
        </authorList>
    </citation>
    <scope>PHOSPHORYLATION [LARGE SCALE ANALYSIS] AT SER-632</scope>
    <scope>IDENTIFICATION BY MASS SPECTROMETRY [LARGE SCALE ANALYSIS]</scope>
</reference>
<reference key="7">
    <citation type="journal article" date="2013" name="J. Proteome Res.">
        <title>Toward a comprehensive characterization of a human cancer cell phosphoproteome.</title>
        <authorList>
            <person name="Zhou H."/>
            <person name="Di Palma S."/>
            <person name="Preisinger C."/>
            <person name="Peng M."/>
            <person name="Polat A.N."/>
            <person name="Heck A.J."/>
            <person name="Mohammed S."/>
        </authorList>
    </citation>
    <scope>PHOSPHORYLATION [LARGE SCALE ANALYSIS] AT SER-634</scope>
    <scope>IDENTIFICATION BY MASS SPECTROMETRY [LARGE SCALE ANALYSIS]</scope>
    <source>
        <tissue>Cervix carcinoma</tissue>
        <tissue>Erythroleukemia</tissue>
    </source>
</reference>
<reference key="8">
    <citation type="journal article" date="2014" name="Nat. Struct. Mol. Biol.">
        <title>Uncovering global SUMOylation signaling networks in a site-specific manner.</title>
        <authorList>
            <person name="Hendriks I.A."/>
            <person name="D'Souza R.C."/>
            <person name="Yang B."/>
            <person name="Verlaan-de Vries M."/>
            <person name="Mann M."/>
            <person name="Vertegaal A.C."/>
        </authorList>
    </citation>
    <scope>SUMOYLATION [LARGE SCALE ANALYSIS] AT LYS-839 AND LYS-1599</scope>
    <scope>IDENTIFICATION BY MASS SPECTROMETRY [LARGE SCALE ANALYSIS]</scope>
</reference>
<reference key="9">
    <citation type="journal article" date="2015" name="Cell Rep.">
        <title>SUMO-2 orchestrates chromatin modifiers in response to DNA damage.</title>
        <authorList>
            <person name="Hendriks I.A."/>
            <person name="Treffers L.W."/>
            <person name="Verlaan-de Vries M."/>
            <person name="Olsen J.V."/>
            <person name="Vertegaal A.C."/>
        </authorList>
    </citation>
    <scope>SUMOYLATION [LARGE SCALE ANALYSIS] AT LYS-839</scope>
    <scope>IDENTIFICATION BY MASS SPECTROMETRY [LARGE SCALE ANALYSIS]</scope>
</reference>
<reference key="10">
    <citation type="journal article" date="2015" name="Mol. Cell. Proteomics">
        <title>System-wide analysis of SUMOylation dynamics in response to replication stress reveals novel small ubiquitin-like modified target proteins and acceptor lysines relevant for genome stability.</title>
        <authorList>
            <person name="Xiao Z."/>
            <person name="Chang J.G."/>
            <person name="Hendriks I.A."/>
            <person name="Sigurdsson J.O."/>
            <person name="Olsen J.V."/>
            <person name="Vertegaal A.C."/>
        </authorList>
    </citation>
    <scope>SUMOYLATION [LARGE SCALE ANALYSIS] AT LYS-839; LYS-1599 AND LYS-1611</scope>
    <scope>IDENTIFICATION BY MASS SPECTROMETRY [LARGE SCALE ANALYSIS]</scope>
</reference>
<reference key="11">
    <citation type="journal article" date="2017" name="Nat. Struct. Mol. Biol.">
        <title>Site-specific mapping of the human SUMO proteome reveals co-modification with phosphorylation.</title>
        <authorList>
            <person name="Hendriks I.A."/>
            <person name="Lyon D."/>
            <person name="Young C."/>
            <person name="Jensen L.J."/>
            <person name="Vertegaal A.C."/>
            <person name="Nielsen M.L."/>
        </authorList>
    </citation>
    <scope>SUMOYLATION [LARGE SCALE ANALYSIS] AT LYS-622; LYS-839; LYS-1423; LYS-1599; LYS-1611; LYS-1696 AND LYS-1762</scope>
    <scope>IDENTIFICATION BY MASS SPECTROMETRY [LARGE SCALE ANALYSIS]</scope>
</reference>
<comment type="function">
    <text>May be involved in transcriptional regulation.</text>
</comment>
<comment type="subunit">
    <text evidence="1">Interacts with RIT1 and RIT2.</text>
</comment>
<comment type="interaction">
    <interactant intactId="EBI-958266">
        <id>Q13129</id>
    </interactant>
    <interactant intactId="EBI-365845">
        <id>Q92963</id>
        <label>RIT1</label>
    </interactant>
    <organismsDiffer>false</organismsDiffer>
    <experiments>3</experiments>
</comment>
<comment type="interaction">
    <interactant intactId="EBI-958266">
        <id>Q13129</id>
    </interactant>
    <interactant intactId="EBI-2649620">
        <id>P70425</id>
        <label>Rit2</label>
    </interactant>
    <organismsDiffer>true</organismsDiffer>
    <experiments>2</experiments>
</comment>
<comment type="interaction">
    <interactant intactId="EBI-958266">
        <id>Q13129</id>
    </interactant>
    <interactant intactId="EBI-6927928">
        <id>PRO_0000045603</id>
        <dbReference type="UniProtKB" id="Q99IB8"/>
    </interactant>
    <organismsDiffer>true</organismsDiffer>
    <experiments>2</experiments>
</comment>
<comment type="subcellular location">
    <subcellularLocation>
        <location evidence="4">Nucleus</location>
    </subcellularLocation>
</comment>
<comment type="tissue specificity">
    <text>Widely expressed in fetal and adult tissues.</text>
</comment>
<comment type="miscellaneous">
    <text>In some small cell lung carcinoma (SCLC) cell lines, there is an intrachromosomal rearrangements at 1p32 fusing the first exon of the RLF gene with L-myc.</text>
</comment>
<comment type="similarity">
    <text evidence="4">Belongs to the krueppel C2H2-type zinc-finger protein family.</text>
</comment>
<evidence type="ECO:0000250" key="1"/>
<evidence type="ECO:0000255" key="2">
    <source>
        <dbReference type="PROSITE-ProRule" id="PRU00042"/>
    </source>
</evidence>
<evidence type="ECO:0000256" key="3">
    <source>
        <dbReference type="SAM" id="MobiDB-lite"/>
    </source>
</evidence>
<evidence type="ECO:0000305" key="4"/>
<evidence type="ECO:0007744" key="5">
    <source>
    </source>
</evidence>
<evidence type="ECO:0007744" key="6">
    <source>
    </source>
</evidence>
<evidence type="ECO:0007744" key="7">
    <source>
    </source>
</evidence>
<evidence type="ECO:0007744" key="8">
    <source>
    </source>
</evidence>
<evidence type="ECO:0007744" key="9">
    <source>
    </source>
</evidence>
<evidence type="ECO:0007744" key="10">
    <source>
    </source>
</evidence>
<evidence type="ECO:0007744" key="11">
    <source>
    </source>
</evidence>
<gene>
    <name type="primary">RLF</name>
</gene>
<accession>Q13129</accession>
<accession>Q14CQ1</accession>
<accession>Q9NU60</accession>
<sequence>MADGKGDAAAVAGAGAEAPAVAGAGDGVETESMVRGHRPVSPAPGASGLRPCLWQLETELREQEVSEVSSLNYCRSFCQTLLQYASNKNASEHIVYLLEVYRLAIQSFASARPYLTTECEDVLLVLGRLVLSCFELLLSVSESELPCEVWLPFLQSLQESHDALLEFGNNNLQILVHVTKEGVWKNPVLLKILSQQPVETEEVNKLIAQEGPSFLQMRIKHLLKSNCIPQATALSKLCAESKEISNVSSFQQAYITCLCSMLPNEDAIKEIAKVDCKEVLDIICNLESEGQDNTAFVLCTTYLTQQLQTASVYCSWELTLFWSKLQRRIDPSLDTFLERCRQFGVIAKTQQHLFCLIRVIQTEAQDAGLGVSILLCVRALQLRSSEDEEMKASVCKTIACLLPEDLEVRRACQLTEFLIEPSLDGFNMLEELYLQPDQKFDEENAPVPNSLRCELLLALKAHWPFDPEFWDWKTLKRHCHQLLGQEASDSDDDLSGYEMSINDTDVLESFLSDYDEGKEDKQYRRRDLTDQHKEKRDKKPIGSSERYQRWLQYKFFCLLCKRECIEARILHHSKMHMEDGIYTCPVCIKKFKRKEMFVPHVMEHVKMPPSRRDRSKKKLLLKGSQKGICPKSPSAIPEQNHSLNDQAKGESHEYVTFSKLEDCHLQDRDLYPCPGTDCSRVFKQFKYLSVHLKAEHQNNDENAKHYLDMKNRREKCTYCRRHFMSAFHLREHEQVHCGPQPYMCVSIDCYARFGSVNELLNHKQKHDDLRYKCELNGCNIVFSDLGQLYHHEAQHFRDASYTCNFLGCKKFYYSKIEYQNHLSMHNVENSNGDIKKSVKLEESATGEKQDCINQPHLLNQTDKSHLPEDLFCAESANSQIDTETAENLKENSDSNSSDQLSHSSSASMNEELIDTLDHSETMQDVLLSNEKVFGPSSLKEKCSSMAVCFDGTKFTCGFDGCGSTYKNARGMQKHLRKVHPYHFKPKKIKTKDLFPSLGNEHNQTTEKLDAEPKPCSDTNSDSPDEGLDHNIHIKCKREHQGYSSESSICASKRPCTEDTMLELLLRLKHLSLKNSITHGSFSGSLQGYPSSGAKSLQSVSSISDLNFQNQDENMPSQYLAQLAAKPFFCELQGCKYEFVTREALLMHYLKKHNYSKEKVLQLTMFQHRYSPFQCHICQRSFTRKTHLRIHYKNKHQIGSDRATHKLLDNEKCDHEGPCSVDRLKGDCSAELGGDPSSNSEKPHCHPKKDECSSETDLESSCEETESKTSDISSPIGSHREEQEGREGRGSRRTVAKGNLCYILNKYHKPFHCIHKTCNSSFTNLKGLIRHYRTVHQYNKEQLCLEKDKARTKRELVKCKKIFACKYKECNKRFLCSKALAKHCSDSHNLDHIEEPKVLSEAGSAARFSCNQPQCPAVFYTFNKLKHHLMEQHNIEGEIHSDYEIHCDLNGCGQIFTHRSNYSQHVYYRHKDYYDDLFRSQKVANERLLRSEKVCQTADTQGHEHQTTRRSFNAKSKKCGLIKEKKAPISFKTRAEALHMCVEHSEHTQYPCMVQGCLSVVKLESSIVRHYKRTHQMSSAYLEQQMENLVVCVKYGTKIKEEPPSEADPCIKKEENRSCESERTEHSHSPGDSSAPIQNTDCCHSSERDGGQKGCIESSSVFDADTLLYRGTLKCNHSSKTTSLEQCNIVQPPPPCKIENSIPNPNGTESGTYFTSFQLPLPRIKESETRQHSSGQENTVKNPTHVPKENFRKHSQPRSFDLKTYKPMGFESSFLKFIQESEEKEDDFDDWEPSEHLTLSNSSQSSNDLTGNVVANNMVNDSEPEVDIPHSSSDSTIHENLTAIPPLIVAETTTVPSLENLRVVLDKALTDCGELALKQLHYLRPVVVLERSKFSTPILDLFPTKKTDELCVGSS</sequence>
<proteinExistence type="evidence at protein level"/>
<dbReference type="EMBL" id="U22377">
    <property type="protein sequence ID" value="AAC50396.1"/>
    <property type="molecule type" value="mRNA"/>
</dbReference>
<dbReference type="EMBL" id="AL050341">
    <property type="status" value="NOT_ANNOTATED_CDS"/>
    <property type="molecule type" value="Genomic_DNA"/>
</dbReference>
<dbReference type="EMBL" id="AL929567">
    <property type="status" value="NOT_ANNOTATED_CDS"/>
    <property type="molecule type" value="Genomic_DNA"/>
</dbReference>
<dbReference type="EMBL" id="AL512599">
    <property type="status" value="NOT_ANNOTATED_CDS"/>
    <property type="molecule type" value="Genomic_DNA"/>
</dbReference>
<dbReference type="EMBL" id="AL356424">
    <property type="status" value="NOT_ANNOTATED_CDS"/>
    <property type="molecule type" value="Genomic_DNA"/>
</dbReference>
<dbReference type="EMBL" id="BC113666">
    <property type="protein sequence ID" value="AAI13667.1"/>
    <property type="molecule type" value="mRNA"/>
</dbReference>
<dbReference type="CCDS" id="CCDS448.1"/>
<dbReference type="PIR" id="S21662">
    <property type="entry name" value="S21662"/>
</dbReference>
<dbReference type="RefSeq" id="NP_036553.2">
    <property type="nucleotide sequence ID" value="NM_012421.4"/>
</dbReference>
<dbReference type="BioGRID" id="111950">
    <property type="interactions" value="66"/>
</dbReference>
<dbReference type="FunCoup" id="Q13129">
    <property type="interactions" value="3569"/>
</dbReference>
<dbReference type="IntAct" id="Q13129">
    <property type="interactions" value="31"/>
</dbReference>
<dbReference type="MINT" id="Q13129"/>
<dbReference type="STRING" id="9606.ENSP00000361857"/>
<dbReference type="GlyGen" id="Q13129">
    <property type="glycosylation" value="1 site, 1 N-linked glycan (1 site)"/>
</dbReference>
<dbReference type="iPTMnet" id="Q13129"/>
<dbReference type="PhosphoSitePlus" id="Q13129"/>
<dbReference type="BioMuta" id="RLF"/>
<dbReference type="DMDM" id="62296764"/>
<dbReference type="jPOST" id="Q13129"/>
<dbReference type="MassIVE" id="Q13129"/>
<dbReference type="PaxDb" id="9606-ENSP00000361857"/>
<dbReference type="PeptideAtlas" id="Q13129"/>
<dbReference type="ProteomicsDB" id="59179"/>
<dbReference type="Pumba" id="Q13129"/>
<dbReference type="Antibodypedia" id="46843">
    <property type="antibodies" value="38 antibodies from 13 providers"/>
</dbReference>
<dbReference type="DNASU" id="6018"/>
<dbReference type="Ensembl" id="ENST00000372771.5">
    <property type="protein sequence ID" value="ENSP00000361857.4"/>
    <property type="gene ID" value="ENSG00000117000.9"/>
</dbReference>
<dbReference type="GeneID" id="6018"/>
<dbReference type="KEGG" id="hsa:6018"/>
<dbReference type="MANE-Select" id="ENST00000372771.5">
    <property type="protein sequence ID" value="ENSP00000361857.4"/>
    <property type="RefSeq nucleotide sequence ID" value="NM_012421.4"/>
    <property type="RefSeq protein sequence ID" value="NP_036553.2"/>
</dbReference>
<dbReference type="UCSC" id="uc001cfc.5">
    <property type="organism name" value="human"/>
</dbReference>
<dbReference type="AGR" id="HGNC:10025"/>
<dbReference type="CTD" id="6018"/>
<dbReference type="DisGeNET" id="6018"/>
<dbReference type="GeneCards" id="RLF"/>
<dbReference type="HGNC" id="HGNC:10025">
    <property type="gene designation" value="RLF"/>
</dbReference>
<dbReference type="HPA" id="ENSG00000117000">
    <property type="expression patterns" value="Tissue enhanced (bone)"/>
</dbReference>
<dbReference type="MIM" id="180610">
    <property type="type" value="gene"/>
</dbReference>
<dbReference type="neXtProt" id="NX_Q13129"/>
<dbReference type="OpenTargets" id="ENSG00000117000"/>
<dbReference type="PharmGKB" id="PA34398"/>
<dbReference type="VEuPathDB" id="HostDB:ENSG00000117000"/>
<dbReference type="eggNOG" id="KOG1721">
    <property type="taxonomic scope" value="Eukaryota"/>
</dbReference>
<dbReference type="GeneTree" id="ENSGT00950000183034"/>
<dbReference type="HOGENOM" id="CLU_000520_0_0_1"/>
<dbReference type="InParanoid" id="Q13129"/>
<dbReference type="OMA" id="SMFQHRY"/>
<dbReference type="OrthoDB" id="8691423at2759"/>
<dbReference type="PAN-GO" id="Q13129">
    <property type="GO annotations" value="4 GO annotations based on evolutionary models"/>
</dbReference>
<dbReference type="PhylomeDB" id="Q13129"/>
<dbReference type="TreeFam" id="TF350813"/>
<dbReference type="PathwayCommons" id="Q13129"/>
<dbReference type="SignaLink" id="Q13129"/>
<dbReference type="SIGNOR" id="Q13129"/>
<dbReference type="BioGRID-ORCS" id="6018">
    <property type="hits" value="30 hits in 1166 CRISPR screens"/>
</dbReference>
<dbReference type="ChiTaRS" id="RLF">
    <property type="organism name" value="human"/>
</dbReference>
<dbReference type="GeneWiki" id="RLF_(gene)"/>
<dbReference type="GenomeRNAi" id="6018"/>
<dbReference type="Pharos" id="Q13129">
    <property type="development level" value="Tdark"/>
</dbReference>
<dbReference type="PRO" id="PR:Q13129"/>
<dbReference type="Proteomes" id="UP000005640">
    <property type="component" value="Chromosome 1"/>
</dbReference>
<dbReference type="RNAct" id="Q13129">
    <property type="molecule type" value="protein"/>
</dbReference>
<dbReference type="Bgee" id="ENSG00000117000">
    <property type="expression patterns" value="Expressed in secondary oocyte and 204 other cell types or tissues"/>
</dbReference>
<dbReference type="GO" id="GO:0005634">
    <property type="term" value="C:nucleus"/>
    <property type="evidence" value="ECO:0000250"/>
    <property type="project" value="UniProtKB"/>
</dbReference>
<dbReference type="GO" id="GO:0003677">
    <property type="term" value="F:DNA binding"/>
    <property type="evidence" value="ECO:0000318"/>
    <property type="project" value="GO_Central"/>
</dbReference>
<dbReference type="GO" id="GO:0001228">
    <property type="term" value="F:DNA-binding transcription activator activity, RNA polymerase II-specific"/>
    <property type="evidence" value="ECO:0000250"/>
    <property type="project" value="UniProtKB"/>
</dbReference>
<dbReference type="GO" id="GO:0000981">
    <property type="term" value="F:DNA-binding transcription factor activity, RNA polymerase II-specific"/>
    <property type="evidence" value="ECO:0000318"/>
    <property type="project" value="GO_Central"/>
</dbReference>
<dbReference type="GO" id="GO:0008270">
    <property type="term" value="F:zinc ion binding"/>
    <property type="evidence" value="ECO:0007669"/>
    <property type="project" value="UniProtKB-KW"/>
</dbReference>
<dbReference type="GO" id="GO:0031452">
    <property type="term" value="P:negative regulation of heterochromatin formation"/>
    <property type="evidence" value="ECO:0007669"/>
    <property type="project" value="Ensembl"/>
</dbReference>
<dbReference type="GO" id="GO:0045893">
    <property type="term" value="P:positive regulation of DNA-templated transcription"/>
    <property type="evidence" value="ECO:0000250"/>
    <property type="project" value="UniProtKB"/>
</dbReference>
<dbReference type="GO" id="GO:0045944">
    <property type="term" value="P:positive regulation of transcription by RNA polymerase II"/>
    <property type="evidence" value="ECO:0000250"/>
    <property type="project" value="UniProtKB"/>
</dbReference>
<dbReference type="GO" id="GO:0006357">
    <property type="term" value="P:regulation of transcription by RNA polymerase II"/>
    <property type="evidence" value="ECO:0000318"/>
    <property type="project" value="GO_Central"/>
</dbReference>
<dbReference type="Gene3D" id="3.30.160.60">
    <property type="entry name" value="Classic Zinc Finger"/>
    <property type="match status" value="5"/>
</dbReference>
<dbReference type="InterPro" id="IPR052251">
    <property type="entry name" value="GH-ZnFinger_Regulators"/>
</dbReference>
<dbReference type="InterPro" id="IPR036236">
    <property type="entry name" value="Znf_C2H2_sf"/>
</dbReference>
<dbReference type="InterPro" id="IPR013087">
    <property type="entry name" value="Znf_C2H2_type"/>
</dbReference>
<dbReference type="PANTHER" id="PTHR15507">
    <property type="entry name" value="ZINC FINGER PROTEIN RLF"/>
    <property type="match status" value="1"/>
</dbReference>
<dbReference type="PANTHER" id="PTHR15507:SF18">
    <property type="entry name" value="ZINC FINGER PROTEIN RLF"/>
    <property type="match status" value="1"/>
</dbReference>
<dbReference type="Pfam" id="PF00096">
    <property type="entry name" value="zf-C2H2"/>
    <property type="match status" value="1"/>
</dbReference>
<dbReference type="Pfam" id="PF25420">
    <property type="entry name" value="zf-C2H2_ZN292"/>
    <property type="match status" value="1"/>
</dbReference>
<dbReference type="SMART" id="SM00355">
    <property type="entry name" value="ZnF_C2H2"/>
    <property type="match status" value="15"/>
</dbReference>
<dbReference type="SUPFAM" id="SSF57667">
    <property type="entry name" value="beta-beta-alpha zinc fingers"/>
    <property type="match status" value="1"/>
</dbReference>
<dbReference type="PROSITE" id="PS00028">
    <property type="entry name" value="ZINC_FINGER_C2H2_1"/>
    <property type="match status" value="14"/>
</dbReference>
<dbReference type="PROSITE" id="PS50157">
    <property type="entry name" value="ZINC_FINGER_C2H2_2"/>
    <property type="match status" value="11"/>
</dbReference>
<feature type="chain" id="PRO_0000047325" description="Zinc finger protein Rlf">
    <location>
        <begin position="1"/>
        <end position="1914"/>
    </location>
</feature>
<feature type="zinc finger region" description="C2H2-type 1" evidence="2">
    <location>
        <begin position="582"/>
        <end position="604"/>
    </location>
</feature>
<feature type="zinc finger region" description="C2H2-type 2" evidence="2">
    <location>
        <begin position="671"/>
        <end position="696"/>
    </location>
</feature>
<feature type="zinc finger region" description="C2H2-type 3" evidence="2">
    <location>
        <begin position="714"/>
        <end position="736"/>
    </location>
</feature>
<feature type="zinc finger region" description="C2H2-type 4" evidence="2">
    <location>
        <begin position="742"/>
        <end position="766"/>
    </location>
</feature>
<feature type="zinc finger region" description="C2H2-type 5" evidence="2">
    <location>
        <begin position="771"/>
        <end position="795"/>
    </location>
</feature>
<feature type="zinc finger region" description="C2H2-type 6" evidence="2">
    <location>
        <begin position="801"/>
        <end position="825"/>
    </location>
</feature>
<feature type="zinc finger region" description="C2H2-type 7" evidence="2">
    <location>
        <begin position="954"/>
        <end position="979"/>
    </location>
</feature>
<feature type="zinc finger region" description="C2H2-type 8" evidence="2">
    <location>
        <begin position="1127"/>
        <end position="1152"/>
    </location>
</feature>
<feature type="zinc finger region" description="C2H2-type 9" evidence="2">
    <location>
        <begin position="1172"/>
        <end position="1195"/>
    </location>
</feature>
<feature type="zinc finger region" description="C2H2-type 10" evidence="2">
    <location>
        <begin position="1310"/>
        <end position="1335"/>
    </location>
</feature>
<feature type="zinc finger region" description="C2H2-type 11" evidence="2">
    <location>
        <begin position="1362"/>
        <end position="1387"/>
    </location>
</feature>
<feature type="zinc finger region" description="C2H2-type 12" evidence="2">
    <location>
        <begin position="1407"/>
        <end position="1432"/>
    </location>
</feature>
<feature type="zinc finger region" description="C2H2-type 13" evidence="2">
    <location>
        <begin position="1444"/>
        <end position="1469"/>
    </location>
</feature>
<feature type="zinc finger region" description="C2H2-type 14" evidence="2">
    <location>
        <begin position="1549"/>
        <end position="1574"/>
    </location>
</feature>
<feature type="region of interest" description="Disordered" evidence="3">
    <location>
        <begin position="521"/>
        <end position="541"/>
    </location>
</feature>
<feature type="region of interest" description="Disordered" evidence="3">
    <location>
        <begin position="882"/>
        <end position="907"/>
    </location>
</feature>
<feature type="region of interest" description="Disordered" evidence="3">
    <location>
        <begin position="993"/>
        <end position="1028"/>
    </location>
</feature>
<feature type="region of interest" description="Disordered" evidence="3">
    <location>
        <begin position="1231"/>
        <end position="1290"/>
    </location>
</feature>
<feature type="region of interest" description="Disordered" evidence="3">
    <location>
        <begin position="1620"/>
        <end position="1654"/>
    </location>
</feature>
<feature type="region of interest" description="Disordered" evidence="3">
    <location>
        <begin position="1725"/>
        <end position="1757"/>
    </location>
</feature>
<feature type="region of interest" description="Disordered" evidence="3">
    <location>
        <begin position="1783"/>
        <end position="1807"/>
    </location>
</feature>
<feature type="compositionally biased region" description="Basic and acidic residues" evidence="3">
    <location>
        <begin position="521"/>
        <end position="540"/>
    </location>
</feature>
<feature type="compositionally biased region" description="Low complexity" evidence="3">
    <location>
        <begin position="893"/>
        <end position="907"/>
    </location>
</feature>
<feature type="compositionally biased region" description="Basic and acidic residues" evidence="3">
    <location>
        <begin position="1003"/>
        <end position="1014"/>
    </location>
</feature>
<feature type="compositionally biased region" description="Basic and acidic residues" evidence="3">
    <location>
        <begin position="1240"/>
        <end position="1251"/>
    </location>
</feature>
<feature type="compositionally biased region" description="Acidic residues" evidence="3">
    <location>
        <begin position="1252"/>
        <end position="1263"/>
    </location>
</feature>
<feature type="compositionally biased region" description="Basic and acidic residues" evidence="3">
    <location>
        <begin position="1277"/>
        <end position="1289"/>
    </location>
</feature>
<feature type="compositionally biased region" description="Polar residues" evidence="3">
    <location>
        <begin position="1629"/>
        <end position="1642"/>
    </location>
</feature>
<feature type="compositionally biased region" description="Polar residues" evidence="3">
    <location>
        <begin position="1731"/>
        <end position="1741"/>
    </location>
</feature>
<feature type="compositionally biased region" description="Polar residues" evidence="3">
    <location>
        <begin position="1796"/>
        <end position="1807"/>
    </location>
</feature>
<feature type="modified residue" description="Phosphoserine" evidence="5">
    <location>
        <position position="41"/>
    </location>
</feature>
<feature type="modified residue" description="Phosphoserine" evidence="6">
    <location>
        <position position="632"/>
    </location>
</feature>
<feature type="modified residue" description="Phosphoserine" evidence="7">
    <location>
        <position position="634"/>
    </location>
</feature>
<feature type="cross-link" description="Glycyl lysine isopeptide (Lys-Gly) (interchain with G-Cter in SUMO2)" evidence="11">
    <location>
        <position position="622"/>
    </location>
</feature>
<feature type="cross-link" description="Glycyl lysine isopeptide (Lys-Gly) (interchain with G-Cter in SUMO2)" evidence="8 9 10 11">
    <location>
        <position position="839"/>
    </location>
</feature>
<feature type="cross-link" description="Glycyl lysine isopeptide (Lys-Gly) (interchain with G-Cter in SUMO2)" evidence="11">
    <location>
        <position position="1423"/>
    </location>
</feature>
<feature type="cross-link" description="Glycyl lysine isopeptide (Lys-Gly) (interchain with G-Cter in SUMO2)" evidence="8 9 11">
    <location>
        <position position="1599"/>
    </location>
</feature>
<feature type="cross-link" description="Glycyl lysine isopeptide (Lys-Gly) (interchain with G-Cter in SUMO2)" evidence="9 11">
    <location>
        <position position="1611"/>
    </location>
</feature>
<feature type="cross-link" description="Glycyl lysine isopeptide (Lys-Gly) (interchain with G-Cter in SUMO2)" evidence="11">
    <location>
        <position position="1696"/>
    </location>
</feature>
<feature type="cross-link" description="Glycyl lysine isopeptide (Lys-Gly) (interchain with G-Cter in SUMO2)" evidence="11">
    <location>
        <position position="1762"/>
    </location>
</feature>
<feature type="sequence variant" id="VAR_052739" description="In dbSNP:rs35189918.">
    <original>R</original>
    <variation>K</variation>
    <location>
        <position position="668"/>
    </location>
</feature>
<feature type="sequence variant" id="VAR_052740" description="In dbSNP:rs35563960.">
    <original>V</original>
    <variation>A</variation>
    <location>
        <position position="932"/>
    </location>
</feature>
<feature type="sequence variant" id="VAR_052741" description="In dbSNP:rs35042446.">
    <original>G</original>
    <variation>D</variation>
    <location>
        <position position="957"/>
    </location>
</feature>
<feature type="sequence variant" id="VAR_061929" description="In dbSNP:rs34123123.">
    <original>P</original>
    <variation>L</variation>
    <location>
        <position position="1629"/>
    </location>
</feature>
<feature type="sequence variant" id="VAR_061930" description="In dbSNP:rs34141181.">
    <original>Q</original>
    <variation>E</variation>
    <location>
        <position position="1685"/>
    </location>
</feature>
<feature type="sequence variant" id="VAR_052742" description="In dbSNP:rs10889205.">
    <original>E</original>
    <variation>D</variation>
    <location>
        <position position="1784"/>
    </location>
</feature>
<feature type="sequence conflict" description="In Ref. 1; AAC50396." evidence="4" ref="1">
    <original>HTQ</original>
    <variation>LSL</variation>
    <location>
        <begin position="1546"/>
        <end position="1548"/>
    </location>
</feature>
<protein>
    <recommendedName>
        <fullName>Zinc finger protein Rlf</fullName>
    </recommendedName>
    <alternativeName>
        <fullName>Rearranged L-myc fusion gene protein</fullName>
    </alternativeName>
    <alternativeName>
        <fullName>Zn-15-related protein</fullName>
    </alternativeName>
</protein>